<feature type="chain" id="PRO_0000424470" description="Ferritin heavy chain">
    <location>
        <begin position="1"/>
        <end position="183"/>
    </location>
</feature>
<feature type="initiator methionine" description="Removed; alternate" evidence="1">
    <location>
        <position position="1"/>
    </location>
</feature>
<feature type="chain" id="PRO_0000226721" description="Ferritin heavy chain, N-terminally processed">
    <location>
        <begin position="2"/>
        <end position="183"/>
    </location>
</feature>
<feature type="domain" description="Ferritin-like diiron" evidence="4">
    <location>
        <begin position="11"/>
        <end position="160"/>
    </location>
</feature>
<feature type="binding site" evidence="4">
    <location>
        <position position="28"/>
    </location>
    <ligand>
        <name>Fe cation</name>
        <dbReference type="ChEBI" id="CHEBI:24875"/>
        <label>1</label>
    </ligand>
</feature>
<feature type="binding site" evidence="4">
    <location>
        <position position="63"/>
    </location>
    <ligand>
        <name>Fe cation</name>
        <dbReference type="ChEBI" id="CHEBI:24875"/>
        <label>1</label>
    </ligand>
</feature>
<feature type="binding site" evidence="4">
    <location>
        <position position="63"/>
    </location>
    <ligand>
        <name>Fe cation</name>
        <dbReference type="ChEBI" id="CHEBI:24875"/>
        <label>2</label>
    </ligand>
</feature>
<feature type="binding site" evidence="4">
    <location>
        <position position="66"/>
    </location>
    <ligand>
        <name>Fe cation</name>
        <dbReference type="ChEBI" id="CHEBI:24875"/>
        <label>1</label>
    </ligand>
</feature>
<feature type="binding site" evidence="4">
    <location>
        <position position="108"/>
    </location>
    <ligand>
        <name>Fe cation</name>
        <dbReference type="ChEBI" id="CHEBI:24875"/>
        <label>2</label>
    </ligand>
</feature>
<feature type="binding site" evidence="4">
    <location>
        <position position="142"/>
    </location>
    <ligand>
        <name>Fe cation</name>
        <dbReference type="ChEBI" id="CHEBI:24875"/>
        <label>2</label>
    </ligand>
</feature>
<feature type="modified residue" description="N-acetylmethionine" evidence="1">
    <location>
        <position position="1"/>
    </location>
</feature>
<feature type="modified residue" description="N-acetylthreonine; in Ferritin heavy chain, N-terminally processed" evidence="1">
    <location>
        <position position="2"/>
    </location>
</feature>
<feature type="modified residue" description="Phosphoserine" evidence="1">
    <location>
        <position position="179"/>
    </location>
</feature>
<feature type="modified residue" description="Phosphoserine" evidence="1">
    <location>
        <position position="183"/>
    </location>
</feature>
<accession>Q2MHN2</accession>
<name>FRIH_FELCA</name>
<evidence type="ECO:0000250" key="1">
    <source>
        <dbReference type="UniProtKB" id="P02794"/>
    </source>
</evidence>
<evidence type="ECO:0000250" key="2">
    <source>
        <dbReference type="UniProtKB" id="P09528"/>
    </source>
</evidence>
<evidence type="ECO:0000250" key="3">
    <source>
        <dbReference type="UniProtKB" id="P19130"/>
    </source>
</evidence>
<evidence type="ECO:0000255" key="4">
    <source>
        <dbReference type="PROSITE-ProRule" id="PRU00085"/>
    </source>
</evidence>
<evidence type="ECO:0000305" key="5"/>
<dbReference type="EC" id="1.16.3.1" evidence="1"/>
<dbReference type="EMBL" id="AB193257">
    <property type="protein sequence ID" value="BAE78405.1"/>
    <property type="molecule type" value="mRNA"/>
</dbReference>
<dbReference type="RefSeq" id="NP_001041616.1">
    <property type="nucleotide sequence ID" value="NM_001048151.1"/>
</dbReference>
<dbReference type="SMR" id="Q2MHN2"/>
<dbReference type="FunCoup" id="Q2MHN2">
    <property type="interactions" value="15"/>
</dbReference>
<dbReference type="STRING" id="9685.ENSFCAP00000006847"/>
<dbReference type="PaxDb" id="9685-ENSFCAP00000006847"/>
<dbReference type="GeneID" id="654516"/>
<dbReference type="KEGG" id="fca:654516"/>
<dbReference type="CTD" id="2495"/>
<dbReference type="eggNOG" id="KOG2332">
    <property type="taxonomic scope" value="Eukaryota"/>
</dbReference>
<dbReference type="InParanoid" id="Q2MHN2"/>
<dbReference type="OrthoDB" id="186462at2759"/>
<dbReference type="TreeFam" id="TF313885"/>
<dbReference type="Proteomes" id="UP000011712">
    <property type="component" value="Unplaced"/>
</dbReference>
<dbReference type="GO" id="GO:0005776">
    <property type="term" value="C:autophagosome"/>
    <property type="evidence" value="ECO:0007669"/>
    <property type="project" value="UniProtKB-SubCell"/>
</dbReference>
<dbReference type="GO" id="GO:0005737">
    <property type="term" value="C:cytoplasm"/>
    <property type="evidence" value="ECO:0000318"/>
    <property type="project" value="GO_Central"/>
</dbReference>
<dbReference type="GO" id="GO:0031410">
    <property type="term" value="C:cytoplasmic vesicle"/>
    <property type="evidence" value="ECO:0007669"/>
    <property type="project" value="UniProtKB-KW"/>
</dbReference>
<dbReference type="GO" id="GO:0005764">
    <property type="term" value="C:lysosome"/>
    <property type="evidence" value="ECO:0007669"/>
    <property type="project" value="UniProtKB-SubCell"/>
</dbReference>
<dbReference type="GO" id="GO:0008199">
    <property type="term" value="F:ferric iron binding"/>
    <property type="evidence" value="ECO:0000318"/>
    <property type="project" value="GO_Central"/>
</dbReference>
<dbReference type="GO" id="GO:0008198">
    <property type="term" value="F:ferrous iron binding"/>
    <property type="evidence" value="ECO:0000318"/>
    <property type="project" value="GO_Central"/>
</dbReference>
<dbReference type="GO" id="GO:0004322">
    <property type="term" value="F:ferroxidase activity"/>
    <property type="evidence" value="ECO:0007669"/>
    <property type="project" value="UniProtKB-EC"/>
</dbReference>
<dbReference type="GO" id="GO:0006879">
    <property type="term" value="P:intracellular iron ion homeostasis"/>
    <property type="evidence" value="ECO:0007669"/>
    <property type="project" value="UniProtKB-KW"/>
</dbReference>
<dbReference type="GO" id="GO:0006826">
    <property type="term" value="P:iron ion transport"/>
    <property type="evidence" value="ECO:0000318"/>
    <property type="project" value="GO_Central"/>
</dbReference>
<dbReference type="GO" id="GO:0110076">
    <property type="term" value="P:negative regulation of ferroptosis"/>
    <property type="evidence" value="ECO:0000250"/>
    <property type="project" value="UniProtKB"/>
</dbReference>
<dbReference type="CDD" id="cd01056">
    <property type="entry name" value="Euk_Ferritin"/>
    <property type="match status" value="1"/>
</dbReference>
<dbReference type="FunFam" id="1.20.1260.10:FF:000024">
    <property type="entry name" value="Ferritin heavy chain"/>
    <property type="match status" value="1"/>
</dbReference>
<dbReference type="Gene3D" id="1.20.1260.10">
    <property type="match status" value="1"/>
</dbReference>
<dbReference type="InterPro" id="IPR001519">
    <property type="entry name" value="Ferritin"/>
</dbReference>
<dbReference type="InterPro" id="IPR012347">
    <property type="entry name" value="Ferritin-like"/>
</dbReference>
<dbReference type="InterPro" id="IPR009040">
    <property type="entry name" value="Ferritin-like_diiron"/>
</dbReference>
<dbReference type="InterPro" id="IPR009078">
    <property type="entry name" value="Ferritin-like_SF"/>
</dbReference>
<dbReference type="InterPro" id="IPR014034">
    <property type="entry name" value="Ferritin_CS"/>
</dbReference>
<dbReference type="InterPro" id="IPR008331">
    <property type="entry name" value="Ferritin_DPS_dom"/>
</dbReference>
<dbReference type="PANTHER" id="PTHR11431">
    <property type="entry name" value="FERRITIN"/>
    <property type="match status" value="1"/>
</dbReference>
<dbReference type="PANTHER" id="PTHR11431:SF37">
    <property type="entry name" value="FERRITIN HEAVY CHAIN"/>
    <property type="match status" value="1"/>
</dbReference>
<dbReference type="Pfam" id="PF00210">
    <property type="entry name" value="Ferritin"/>
    <property type="match status" value="1"/>
</dbReference>
<dbReference type="SUPFAM" id="SSF47240">
    <property type="entry name" value="Ferritin-like"/>
    <property type="match status" value="1"/>
</dbReference>
<dbReference type="PROSITE" id="PS00540">
    <property type="entry name" value="FERRITIN_1"/>
    <property type="match status" value="1"/>
</dbReference>
<dbReference type="PROSITE" id="PS00204">
    <property type="entry name" value="FERRITIN_2"/>
    <property type="match status" value="1"/>
</dbReference>
<dbReference type="PROSITE" id="PS50905">
    <property type="entry name" value="FERRITIN_LIKE"/>
    <property type="match status" value="1"/>
</dbReference>
<protein>
    <recommendedName>
        <fullName>Ferritin heavy chain</fullName>
        <shortName>Ferritin H subunit</shortName>
        <ecNumber evidence="1">1.16.3.1</ecNumber>
    </recommendedName>
    <component>
        <recommendedName>
            <fullName>Ferritin heavy chain, N-terminally processed</fullName>
        </recommendedName>
    </component>
</protein>
<gene>
    <name type="primary">FTH1</name>
    <name type="synonym">FTH</name>
</gene>
<reference key="1">
    <citation type="journal article" date="2005" name="Jui Seikagaku">
        <title>Sequence analysis of feline ferritin H and L subunit cDNAs.</title>
        <authorList>
            <person name="Orino K."/>
            <person name="Hirata A."/>
            <person name="Watanabe K."/>
        </authorList>
    </citation>
    <scope>NUCLEOTIDE SEQUENCE [MRNA]</scope>
    <source>
        <tissue>Leukocyte</tissue>
    </source>
</reference>
<comment type="function">
    <text evidence="1 2">Stores iron in a soluble, non-toxic, readily available form (By similarity). Important for iron homeostasis (By similarity). Has ferroxidase activity (By similarity). Iron is taken up in the ferrous form and deposited as ferric hydroxides after oxidation (By similarity). Also plays a role in delivery of iron to cells (By similarity). Mediates iron uptake in capsule cells of the developing kidney (By similarity). Delivery to lysosomes is mediated by the cargo receptor NCOA4 for autophagic degradation and release of iron (By similarity).</text>
</comment>
<comment type="catalytic activity">
    <reaction evidence="1">
        <text>4 Fe(2+) + O2 + 4 H(+) = 4 Fe(3+) + 2 H2O</text>
        <dbReference type="Rhea" id="RHEA:11148"/>
        <dbReference type="ChEBI" id="CHEBI:15377"/>
        <dbReference type="ChEBI" id="CHEBI:15378"/>
        <dbReference type="ChEBI" id="CHEBI:15379"/>
        <dbReference type="ChEBI" id="CHEBI:29033"/>
        <dbReference type="ChEBI" id="CHEBI:29034"/>
        <dbReference type="EC" id="1.16.3.1"/>
    </reaction>
</comment>
<comment type="subunit">
    <text evidence="1 2">Oligomer of 24 subunits. There are two types of subunits: L (light) chain and H (heavy) chain. The major chain can be light or heavy, depending on the species and tissue type. The functional molecule forms a roughly spherical shell with a diameter of 12 nm and contains a central cavity into which the insoluble mineral iron core is deposited. Interacts with NCOA4; NCOA4 promotes targeting of the iron-binding ferritin complex to autolysosomes following starvation or iron depletion (By similarity).</text>
</comment>
<comment type="subcellular location">
    <subcellularLocation>
        <location evidence="3">Cytoplasm</location>
    </subcellularLocation>
    <subcellularLocation>
        <location evidence="1">Lysosome</location>
    </subcellularLocation>
    <subcellularLocation>
        <location evidence="1">Cytoplasmic vesicle</location>
        <location evidence="1">Autophagosome</location>
    </subcellularLocation>
</comment>
<comment type="similarity">
    <text evidence="5">Belongs to the ferritin family.</text>
</comment>
<sequence length="183" mass="21311">MTTASPSQVRQNYHQDSEAAINRQINLELYASYVYLSMSYYFDRDDVALKNFAKYFLHQSHEEREHAEKLMKLQNQRGGRIFLQDIKKPDRDDWENGLNAMECALHLEKSVNQSLLELHKLATDKNDPHLCDFIETHYLNEQVKSIKELGDHVTNLRKMGTPESGMAEYLFDKHTLGNSDSES</sequence>
<keyword id="KW-0007">Acetylation</keyword>
<keyword id="KW-0963">Cytoplasm</keyword>
<keyword id="KW-0968">Cytoplasmic vesicle</keyword>
<keyword id="KW-0408">Iron</keyword>
<keyword id="KW-0409">Iron storage</keyword>
<keyword id="KW-0458">Lysosome</keyword>
<keyword id="KW-0479">Metal-binding</keyword>
<keyword id="KW-0560">Oxidoreductase</keyword>
<keyword id="KW-0597">Phosphoprotein</keyword>
<keyword id="KW-1185">Reference proteome</keyword>
<organism>
    <name type="scientific">Felis catus</name>
    <name type="common">Cat</name>
    <name type="synonym">Felis silvestris catus</name>
    <dbReference type="NCBI Taxonomy" id="9685"/>
    <lineage>
        <taxon>Eukaryota</taxon>
        <taxon>Metazoa</taxon>
        <taxon>Chordata</taxon>
        <taxon>Craniata</taxon>
        <taxon>Vertebrata</taxon>
        <taxon>Euteleostomi</taxon>
        <taxon>Mammalia</taxon>
        <taxon>Eutheria</taxon>
        <taxon>Laurasiatheria</taxon>
        <taxon>Carnivora</taxon>
        <taxon>Feliformia</taxon>
        <taxon>Felidae</taxon>
        <taxon>Felinae</taxon>
        <taxon>Felis</taxon>
    </lineage>
</organism>
<proteinExistence type="evidence at transcript level"/>